<reference key="1">
    <citation type="submission" date="2007-02" db="EMBL/GenBank/DDBJ databases">
        <title>Complete sequence of Mycobacterium sp. JLS.</title>
        <authorList>
            <consortium name="US DOE Joint Genome Institute"/>
            <person name="Copeland A."/>
            <person name="Lucas S."/>
            <person name="Lapidus A."/>
            <person name="Barry K."/>
            <person name="Detter J.C."/>
            <person name="Glavina del Rio T."/>
            <person name="Hammon N."/>
            <person name="Israni S."/>
            <person name="Dalin E."/>
            <person name="Tice H."/>
            <person name="Pitluck S."/>
            <person name="Chain P."/>
            <person name="Malfatti S."/>
            <person name="Shin M."/>
            <person name="Vergez L."/>
            <person name="Schmutz J."/>
            <person name="Larimer F."/>
            <person name="Land M."/>
            <person name="Hauser L."/>
            <person name="Kyrpides N."/>
            <person name="Mikhailova N."/>
            <person name="Miller C.D."/>
            <person name="Anderson A.J."/>
            <person name="Sims R.C."/>
            <person name="Richardson P."/>
        </authorList>
    </citation>
    <scope>NUCLEOTIDE SEQUENCE [LARGE SCALE GENOMIC DNA]</scope>
    <source>
        <strain>JLS</strain>
    </source>
</reference>
<keyword id="KW-0067">ATP-binding</keyword>
<keyword id="KW-0143">Chaperone</keyword>
<keyword id="KW-0175">Coiled coil</keyword>
<keyword id="KW-0547">Nucleotide-binding</keyword>
<keyword id="KW-0647">Proteasome</keyword>
<proteinExistence type="inferred from homology"/>
<evidence type="ECO:0000255" key="1">
    <source>
        <dbReference type="HAMAP-Rule" id="MF_02112"/>
    </source>
</evidence>
<evidence type="ECO:0000256" key="2">
    <source>
        <dbReference type="SAM" id="MobiDB-lite"/>
    </source>
</evidence>
<feature type="chain" id="PRO_0000397000" description="Proteasome-associated ATPase">
    <location>
        <begin position="1"/>
        <end position="615"/>
    </location>
</feature>
<feature type="region of interest" description="Disordered" evidence="2">
    <location>
        <begin position="1"/>
        <end position="32"/>
    </location>
</feature>
<feature type="region of interest" description="Docks into pockets in the proteasome alpha-ring" evidence="1">
    <location>
        <begin position="614"/>
        <end position="615"/>
    </location>
</feature>
<feature type="coiled-coil region" evidence="1">
    <location>
        <begin position="22"/>
        <end position="100"/>
    </location>
</feature>
<feature type="compositionally biased region" description="Basic and acidic residues" evidence="2">
    <location>
        <begin position="1"/>
        <end position="13"/>
    </location>
</feature>
<feature type="binding site" evidence="1">
    <location>
        <begin position="302"/>
        <end position="307"/>
    </location>
    <ligand>
        <name>ATP</name>
        <dbReference type="ChEBI" id="CHEBI:30616"/>
    </ligand>
</feature>
<accession>A3Q196</accession>
<name>ARC_MYCSJ</name>
<comment type="function">
    <text evidence="1">ATPase which is responsible for recognizing, binding, unfolding and translocation of pupylated proteins into the bacterial 20S proteasome core particle. May be essential for opening the gate of the 20S proteasome via an interaction with its C-terminus, thereby allowing substrate entry and access to the site of proteolysis. Thus, the C-termini of the proteasomal ATPase may function like a 'key in a lock' to induce gate opening and therefore regulate proteolysis.</text>
</comment>
<comment type="pathway">
    <text evidence="1">Protein degradation; proteasomal Pup-dependent pathway.</text>
</comment>
<comment type="subunit">
    <text evidence="1">Homohexamer. Assembles into a hexameric ring structure that caps the 20S proteasome core. Strongly interacts with the prokaryotic ubiquitin-like protein Pup through a hydrophobic interface; the interacting region of ARC lies in its N-terminal coiled-coil domain. There is one Pup binding site per ARC hexamer ring. Upon ATP-binding, the C-terminus of ARC interacts with the alpha-rings of the proteasome core, possibly by binding to the intersubunit pockets.</text>
</comment>
<comment type="domain">
    <text evidence="1">Consists of three main regions, an N-terminal coiled-coil domain that binds to protein Pup and functions as a docking station, an interdomain involved in ARC hexamerization, and a C-terminal ATPase domain of the AAA type.</text>
</comment>
<comment type="similarity">
    <text evidence="1">Belongs to the AAA ATPase family.</text>
</comment>
<protein>
    <recommendedName>
        <fullName evidence="1">Proteasome-associated ATPase</fullName>
    </recommendedName>
    <alternativeName>
        <fullName evidence="1">AAA ATPase forming ring-shaped complexes</fullName>
        <shortName evidence="1">ARC</shortName>
    </alternativeName>
    <alternativeName>
        <fullName evidence="1">Mycobacterial proteasome ATPase</fullName>
    </alternativeName>
</protein>
<dbReference type="EMBL" id="CP000580">
    <property type="protein sequence ID" value="ABN98923.1"/>
    <property type="molecule type" value="Genomic_DNA"/>
</dbReference>
<dbReference type="SMR" id="A3Q196"/>
<dbReference type="KEGG" id="mjl:Mjls_3144"/>
<dbReference type="HOGENOM" id="CLU_036054_0_0_11"/>
<dbReference type="BioCyc" id="MSP164757:G1G8C-3169-MONOMER"/>
<dbReference type="UniPathway" id="UPA00997"/>
<dbReference type="GO" id="GO:0000502">
    <property type="term" value="C:proteasome complex"/>
    <property type="evidence" value="ECO:0007669"/>
    <property type="project" value="UniProtKB-KW"/>
</dbReference>
<dbReference type="GO" id="GO:0005524">
    <property type="term" value="F:ATP binding"/>
    <property type="evidence" value="ECO:0007669"/>
    <property type="project" value="UniProtKB-UniRule"/>
</dbReference>
<dbReference type="GO" id="GO:0016887">
    <property type="term" value="F:ATP hydrolysis activity"/>
    <property type="evidence" value="ECO:0007669"/>
    <property type="project" value="UniProtKB-UniRule"/>
</dbReference>
<dbReference type="GO" id="GO:0019941">
    <property type="term" value="P:modification-dependent protein catabolic process"/>
    <property type="evidence" value="ECO:0007669"/>
    <property type="project" value="InterPro"/>
</dbReference>
<dbReference type="GO" id="GO:0010498">
    <property type="term" value="P:proteasomal protein catabolic process"/>
    <property type="evidence" value="ECO:0007669"/>
    <property type="project" value="InterPro"/>
</dbReference>
<dbReference type="FunFam" id="1.20.5.170:FF:000018">
    <property type="entry name" value="AAA ATPase forming ring-shaped complexes"/>
    <property type="match status" value="1"/>
</dbReference>
<dbReference type="FunFam" id="2.40.50.140:FF:000169">
    <property type="entry name" value="AAA ATPase forming ring-shaped complexes"/>
    <property type="match status" value="1"/>
</dbReference>
<dbReference type="FunFam" id="3.40.50.300:FF:000155">
    <property type="entry name" value="AAA ATPase forming ring-shaped complexes"/>
    <property type="match status" value="1"/>
</dbReference>
<dbReference type="Gene3D" id="1.10.8.60">
    <property type="match status" value="1"/>
</dbReference>
<dbReference type="Gene3D" id="1.20.5.170">
    <property type="match status" value="1"/>
</dbReference>
<dbReference type="Gene3D" id="2.40.50.140">
    <property type="entry name" value="Nucleic acid-binding proteins"/>
    <property type="match status" value="2"/>
</dbReference>
<dbReference type="Gene3D" id="3.40.50.300">
    <property type="entry name" value="P-loop containing nucleotide triphosphate hydrolases"/>
    <property type="match status" value="1"/>
</dbReference>
<dbReference type="HAMAP" id="MF_02112">
    <property type="entry name" value="ARC_ATPase"/>
    <property type="match status" value="1"/>
</dbReference>
<dbReference type="InterPro" id="IPR003593">
    <property type="entry name" value="AAA+_ATPase"/>
</dbReference>
<dbReference type="InterPro" id="IPR050168">
    <property type="entry name" value="AAA_ATPase_domain"/>
</dbReference>
<dbReference type="InterPro" id="IPR003959">
    <property type="entry name" value="ATPase_AAA_core"/>
</dbReference>
<dbReference type="InterPro" id="IPR003960">
    <property type="entry name" value="ATPase_AAA_CS"/>
</dbReference>
<dbReference type="InterPro" id="IPR012340">
    <property type="entry name" value="NA-bd_OB-fold"/>
</dbReference>
<dbReference type="InterPro" id="IPR027417">
    <property type="entry name" value="P-loop_NTPase"/>
</dbReference>
<dbReference type="InterPro" id="IPR032501">
    <property type="entry name" value="Prot_ATP_ID_OB_2nd"/>
</dbReference>
<dbReference type="InterPro" id="IPR041626">
    <property type="entry name" value="Prot_ATP_ID_OB_N"/>
</dbReference>
<dbReference type="InterPro" id="IPR022482">
    <property type="entry name" value="Proteasome_ATPase"/>
</dbReference>
<dbReference type="NCBIfam" id="TIGR03689">
    <property type="entry name" value="pup_AAA"/>
    <property type="match status" value="1"/>
</dbReference>
<dbReference type="PANTHER" id="PTHR23077">
    <property type="entry name" value="AAA-FAMILY ATPASE"/>
    <property type="match status" value="1"/>
</dbReference>
<dbReference type="PANTHER" id="PTHR23077:SF144">
    <property type="entry name" value="PROTEASOME-ASSOCIATED ATPASE"/>
    <property type="match status" value="1"/>
</dbReference>
<dbReference type="Pfam" id="PF00004">
    <property type="entry name" value="AAA"/>
    <property type="match status" value="1"/>
</dbReference>
<dbReference type="Pfam" id="PF16450">
    <property type="entry name" value="Prot_ATP_ID_OB_C"/>
    <property type="match status" value="1"/>
</dbReference>
<dbReference type="Pfam" id="PF17758">
    <property type="entry name" value="Prot_ATP_ID_OB_N"/>
    <property type="match status" value="1"/>
</dbReference>
<dbReference type="SMART" id="SM00382">
    <property type="entry name" value="AAA"/>
    <property type="match status" value="1"/>
</dbReference>
<dbReference type="SUPFAM" id="SSF52540">
    <property type="entry name" value="P-loop containing nucleoside triphosphate hydrolases"/>
    <property type="match status" value="1"/>
</dbReference>
<dbReference type="PROSITE" id="PS00674">
    <property type="entry name" value="AAA"/>
    <property type="match status" value="1"/>
</dbReference>
<organism>
    <name type="scientific">Mycobacterium sp. (strain JLS)</name>
    <dbReference type="NCBI Taxonomy" id="164757"/>
    <lineage>
        <taxon>Bacteria</taxon>
        <taxon>Bacillati</taxon>
        <taxon>Actinomycetota</taxon>
        <taxon>Actinomycetes</taxon>
        <taxon>Mycobacteriales</taxon>
        <taxon>Mycobacteriaceae</taxon>
        <taxon>Mycobacterium</taxon>
    </lineage>
</organism>
<gene>
    <name evidence="1" type="primary">mpa</name>
    <name type="ordered locus">Mjls_3144</name>
</gene>
<sequence length="615" mass="68433">MSESQRHEAREDGFTTPHESGLSSEDAAELEELRREAAALREQLENAVGPQSGLRSARDVHQLEARIDSLAARNAKLMDTLKEARQQLLALREEVDRLGQPPSGYGVLLASHEDDTVDVFTSGRKMRLTCSPNIDVKALKQGQTVRLNEALTVVEAGTFEAVGEISTLREILSDGHRALVVGHADEERIVWLAEPLVSVEHLPDNEVAGPELDDDRPRRLRPGDSLLVDTKAGYAFERIPKAEVEDLVLEEVPDVSYSDIGGLTRQIEQIRDAVELPFLHKDLYREYSLRPPKGVLLYGPPGCGKTLIAKAVANSLAKKMAEVRGDDAREAKSYFLNIKGPELLNKFVGETERHIRLIFQRAREKASEGTPVIVFFDEMDSIFRTRGTGVSSDVETTVVPQLLSEIDGVEGLENVIVIGASNREDMIDPAILRPGRLDVKIKIERPDAEAAQDIFSKYLTEELPVNEDDLAEFGGDRSLTIKAMIEKVVDRMYAEIDDNRFLEVTYANGDKEVMYFKDFNSGAMIQNVVDRAKKYAIKSVLETGQKGLRIQHLLDSIVDEFAENEDLPNTTNPDDWARISGKKGERIVYIRTLVTGKSSSANRAIDTESNLGQYL</sequence>